<name>BLAC_RHOCA</name>
<protein>
    <recommendedName>
        <fullName>Beta-lactamase</fullName>
        <ecNumber>3.5.2.6</ecNumber>
    </recommendedName>
    <alternativeName>
        <fullName>Penicillinase</fullName>
    </alternativeName>
</protein>
<sequence length="293" mass="31296">MRFTATVLSRVATGLALGLSMATASLAETPVEALSETVARIEEQLGARVGLSLMETGTGWSWSHREDELFLMNSTVKVPVCGAILARWDAGRLSLSDALPVRKADLVPYAPVTETRVGGNMTLDELCLAAIDMSDNVAANILIGHLGGPEAVTQFFRSVGDPTSRLDRIEPKLNDFASGDERDTTSPAAMSETLRALLLGDVLSPEARGKLAEWMRHGGVTGALLRAEAEDAWLILDKSGSGSHTRNLVAVIQPEGGAPWIATMFISDTDAEFEVRNEALKDLGRAVVAVVRE</sequence>
<proteinExistence type="inferred from homology"/>
<reference key="1">
    <citation type="journal article" date="1989" name="Biochem. J.">
        <title>The phototrophic bacterium Rhodopseudomonas capsulata sp108 encodes an indigenous class A beta-lactamase.</title>
        <authorList>
            <person name="Campbell J.I.A."/>
            <person name="Scahill S."/>
            <person name="Gibson T."/>
            <person name="Ambler R.P."/>
        </authorList>
    </citation>
    <scope>NUCLEOTIDE SEQUENCE [GENOMIC DNA]</scope>
    <source>
        <strain>SP108</strain>
    </source>
</reference>
<reference key="2">
    <citation type="journal article" date="1991" name="Biochem. J.">
        <title>A standard numbering scheme for the class A beta-lactamases.</title>
        <authorList>
            <person name="Ambler R.P."/>
            <person name="Coulson A.F."/>
            <person name="Frere J.M."/>
            <person name="Ghuysen J.M."/>
            <person name="Joris B."/>
            <person name="Forsman M."/>
            <person name="Levesque R.C."/>
            <person name="Tiraby G."/>
            <person name="Waley S.G."/>
        </authorList>
    </citation>
    <scope>AMINO ACID NUMBERING SCHEME</scope>
</reference>
<comment type="function">
    <text>Hydrolyzes beta-lactams antibiotics. Rates of hydrolysis relative to benzylpenicillin =100: ampicillin = 27, carbenicillin = 25, cloxacillin = 0, cephaloridine = 4.</text>
</comment>
<comment type="catalytic activity">
    <reaction evidence="3">
        <text>a beta-lactam + H2O = a substituted beta-amino acid</text>
        <dbReference type="Rhea" id="RHEA:20401"/>
        <dbReference type="ChEBI" id="CHEBI:15377"/>
        <dbReference type="ChEBI" id="CHEBI:35627"/>
        <dbReference type="ChEBI" id="CHEBI:140347"/>
        <dbReference type="EC" id="3.5.2.6"/>
    </reaction>
</comment>
<comment type="subcellular location">
    <subcellularLocation>
        <location>Periplasm</location>
    </subcellularLocation>
</comment>
<comment type="miscellaneous">
    <text evidence="5">The class A beta-lactamase family has a specific amino-acid numbering system, sometimes called Ambler or ABL numbering and often misspelt as Amber. A multiple sequence alignment was used to derive a consensus sequence and then the consensus was numbered taking into account insertions and deletions. This allows use of identical numbers, e.g. for active site residues, despite differences in protein length. UniProt always uses natural numbering of residues, hence there appear to be differences in numbering between this entry and some papers.</text>
</comment>
<comment type="similarity">
    <text evidence="4">Belongs to the class-A beta-lactamase family.</text>
</comment>
<feature type="signal peptide" evidence="2">
    <location>
        <begin position="1"/>
        <end position="27"/>
    </location>
</feature>
<feature type="chain" id="PRO_0000017009" description="Beta-lactamase">
    <location>
        <begin position="28"/>
        <end position="293"/>
    </location>
</feature>
<feature type="active site" description="Acyl-ester intermediate" evidence="3">
    <location>
        <position position="74"/>
    </location>
</feature>
<feature type="binding site" evidence="1">
    <location>
        <begin position="238"/>
        <end position="240"/>
    </location>
    <ligand>
        <name>substrate</name>
    </ligand>
</feature>
<keyword id="KW-0046">Antibiotic resistance</keyword>
<keyword id="KW-0378">Hydrolase</keyword>
<keyword id="KW-0574">Periplasm</keyword>
<keyword id="KW-0732">Signal</keyword>
<dbReference type="EC" id="3.5.2.6"/>
<dbReference type="EMBL" id="X15791">
    <property type="protein sequence ID" value="CAA33795.1"/>
    <property type="molecule type" value="Genomic_DNA"/>
</dbReference>
<dbReference type="PIR" id="S04649">
    <property type="entry name" value="S04649"/>
</dbReference>
<dbReference type="RefSeq" id="WP_028030786.1">
    <property type="nucleotide sequence ID" value="NG_055629.1"/>
</dbReference>
<dbReference type="SMR" id="P14171"/>
<dbReference type="CARD" id="ARO:3003563">
    <property type="molecule name" value="RCP-1"/>
    <property type="mechanism identifier" value="ARO:0001004"/>
    <property type="mechanism name" value="antibiotic inactivation"/>
</dbReference>
<dbReference type="OrthoDB" id="9784149at2"/>
<dbReference type="GO" id="GO:0042597">
    <property type="term" value="C:periplasmic space"/>
    <property type="evidence" value="ECO:0007669"/>
    <property type="project" value="UniProtKB-SubCell"/>
</dbReference>
<dbReference type="GO" id="GO:0008800">
    <property type="term" value="F:beta-lactamase activity"/>
    <property type="evidence" value="ECO:0007669"/>
    <property type="project" value="UniProtKB-EC"/>
</dbReference>
<dbReference type="GO" id="GO:0030655">
    <property type="term" value="P:beta-lactam antibiotic catabolic process"/>
    <property type="evidence" value="ECO:0007669"/>
    <property type="project" value="InterPro"/>
</dbReference>
<dbReference type="GO" id="GO:0046677">
    <property type="term" value="P:response to antibiotic"/>
    <property type="evidence" value="ECO:0007669"/>
    <property type="project" value="UniProtKB-KW"/>
</dbReference>
<dbReference type="Gene3D" id="3.40.710.10">
    <property type="entry name" value="DD-peptidase/beta-lactamase superfamily"/>
    <property type="match status" value="1"/>
</dbReference>
<dbReference type="InterPro" id="IPR012338">
    <property type="entry name" value="Beta-lactam/transpept-like"/>
</dbReference>
<dbReference type="InterPro" id="IPR045155">
    <property type="entry name" value="Beta-lactam_cat"/>
</dbReference>
<dbReference type="InterPro" id="IPR000871">
    <property type="entry name" value="Beta-lactam_class-A"/>
</dbReference>
<dbReference type="InterPro" id="IPR023650">
    <property type="entry name" value="Beta-lactam_class-A_AS"/>
</dbReference>
<dbReference type="NCBIfam" id="NF033103">
    <property type="entry name" value="bla_class_A"/>
    <property type="match status" value="1"/>
</dbReference>
<dbReference type="NCBIfam" id="NF033466">
    <property type="entry name" value="blaRCP"/>
    <property type="match status" value="1"/>
</dbReference>
<dbReference type="PANTHER" id="PTHR35333">
    <property type="entry name" value="BETA-LACTAMASE"/>
    <property type="match status" value="1"/>
</dbReference>
<dbReference type="PANTHER" id="PTHR35333:SF3">
    <property type="entry name" value="BETA-LACTAMASE-TYPE TRANSPEPTIDASE FOLD CONTAINING PROTEIN"/>
    <property type="match status" value="1"/>
</dbReference>
<dbReference type="Pfam" id="PF13354">
    <property type="entry name" value="Beta-lactamase2"/>
    <property type="match status" value="1"/>
</dbReference>
<dbReference type="PRINTS" id="PR00118">
    <property type="entry name" value="BLACTAMASEA"/>
</dbReference>
<dbReference type="SUPFAM" id="SSF56601">
    <property type="entry name" value="beta-lactamase/transpeptidase-like"/>
    <property type="match status" value="1"/>
</dbReference>
<dbReference type="PROSITE" id="PS00146">
    <property type="entry name" value="BETA_LACTAMASE_A"/>
    <property type="match status" value="1"/>
</dbReference>
<accession>P14171</accession>
<organism>
    <name type="scientific">Rhodobacter capsulatus</name>
    <name type="common">Rhodopseudomonas capsulata</name>
    <dbReference type="NCBI Taxonomy" id="1061"/>
    <lineage>
        <taxon>Bacteria</taxon>
        <taxon>Pseudomonadati</taxon>
        <taxon>Pseudomonadota</taxon>
        <taxon>Alphaproteobacteria</taxon>
        <taxon>Rhodobacterales</taxon>
        <taxon>Rhodobacter group</taxon>
        <taxon>Rhodobacter</taxon>
    </lineage>
</organism>
<evidence type="ECO:0000250" key="1"/>
<evidence type="ECO:0000255" key="2"/>
<evidence type="ECO:0000255" key="3">
    <source>
        <dbReference type="PROSITE-ProRule" id="PRU10101"/>
    </source>
</evidence>
<evidence type="ECO:0000305" key="4"/>
<evidence type="ECO:0000305" key="5">
    <source>
    </source>
</evidence>